<protein>
    <recommendedName>
        <fullName>Chemotaxis protein CheY</fullName>
    </recommendedName>
</protein>
<accession>P0AE67</accession>
<accession>P06143</accession>
<feature type="initiator methionine" description="Removed">
    <location>
        <position position="1"/>
    </location>
</feature>
<feature type="chain" id="PRO_0000081040" description="Chemotaxis protein CheY">
    <location>
        <begin position="2"/>
        <end position="129"/>
    </location>
</feature>
<feature type="domain" description="Response regulatory" evidence="2">
    <location>
        <begin position="7"/>
        <end position="124"/>
    </location>
</feature>
<feature type="binding site" evidence="1">
    <location>
        <position position="12"/>
    </location>
    <ligand>
        <name>Mg(2+)</name>
        <dbReference type="ChEBI" id="CHEBI:18420"/>
    </ligand>
</feature>
<feature type="binding site" evidence="11 15">
    <location>
        <position position="13"/>
    </location>
    <ligand>
        <name>Mg(2+)</name>
        <dbReference type="ChEBI" id="CHEBI:18420"/>
    </ligand>
</feature>
<feature type="binding site" evidence="11 15">
    <location>
        <position position="57"/>
    </location>
    <ligand>
        <name>Mg(2+)</name>
        <dbReference type="ChEBI" id="CHEBI:18420"/>
    </ligand>
</feature>
<feature type="binding site" evidence="11 15">
    <location>
        <position position="59"/>
    </location>
    <ligand>
        <name>Mg(2+)</name>
        <dbReference type="ChEBI" id="CHEBI:18420"/>
    </ligand>
</feature>
<feature type="modified residue" description="4-aspartylphosphate" evidence="2 7 9">
    <location>
        <position position="57"/>
    </location>
</feature>
<feature type="modified residue" description="N6-acetyllysine" evidence="4 13">
    <location>
        <position position="92"/>
    </location>
</feature>
<feature type="modified residue" description="N6-acetyllysine" evidence="6 13">
    <location>
        <position position="109"/>
    </location>
</feature>
<feature type="mutagenesis site" description="Abolishes magnesium binding." evidence="3">
    <original>D</original>
    <variation>A</variation>
    <location>
        <position position="12"/>
    </location>
</feature>
<feature type="mutagenesis site" description="No effect on magnesium binding." evidence="3">
    <original>D</original>
    <variation>A</variation>
    <location>
        <position position="13"/>
    </location>
</feature>
<feature type="mutagenesis site" description="Abolishes magnesium binding." evidence="3">
    <original>D</original>
    <variation>A</variation>
    <location>
        <position position="57"/>
    </location>
</feature>
<feature type="mutagenesis site" description="Impairs chemotaxis; when associated with W-106.">
    <original>T</original>
    <variation>I</variation>
    <location>
        <position position="87"/>
    </location>
</feature>
<feature type="mutagenesis site" description="No effect on chemotaxis." evidence="13">
    <original>K</original>
    <variation>R</variation>
    <location>
        <position position="92"/>
    </location>
</feature>
<feature type="mutagenesis site" description="Enhanced CW flagellar rotational signaling activity.">
    <original>I</original>
    <variation>A</variation>
    <variation>V</variation>
    <location>
        <position position="95"/>
    </location>
</feature>
<feature type="mutagenesis site" description="Loss of CW flagellar rotational signaling activity.">
    <original>I</original>
    <variation>D</variation>
    <variation>K</variation>
    <variation>M</variation>
    <location>
        <position position="95"/>
    </location>
</feature>
<feature type="mutagenesis site" description="Impairs chemotaxis; when associated with I-87.">
    <original>Y</original>
    <variation>W</variation>
    <location>
        <position position="106"/>
    </location>
</feature>
<feature type="sequence conflict" description="In Ref. 2; AAA23570." evidence="14" ref="2">
    <original>A</original>
    <variation>P</variation>
    <location>
        <position position="113"/>
    </location>
</feature>
<feature type="helix" evidence="18">
    <location>
        <begin position="3"/>
        <end position="5"/>
    </location>
</feature>
<feature type="strand" evidence="17">
    <location>
        <begin position="8"/>
        <end position="11"/>
    </location>
</feature>
<feature type="helix" evidence="17">
    <location>
        <begin position="15"/>
        <end position="27"/>
    </location>
</feature>
<feature type="strand" evidence="17">
    <location>
        <begin position="33"/>
        <end position="38"/>
    </location>
</feature>
<feature type="helix" evidence="17">
    <location>
        <begin position="39"/>
        <end position="46"/>
    </location>
</feature>
<feature type="turn" evidence="16">
    <location>
        <begin position="47"/>
        <end position="49"/>
    </location>
</feature>
<feature type="strand" evidence="17">
    <location>
        <begin position="53"/>
        <end position="58"/>
    </location>
</feature>
<feature type="strand" evidence="17">
    <location>
        <begin position="61"/>
        <end position="63"/>
    </location>
</feature>
<feature type="helix" evidence="17">
    <location>
        <begin position="65"/>
        <end position="73"/>
    </location>
</feature>
<feature type="turn" evidence="19">
    <location>
        <begin position="76"/>
        <end position="80"/>
    </location>
</feature>
<feature type="strand" evidence="17">
    <location>
        <begin position="83"/>
        <end position="89"/>
    </location>
</feature>
<feature type="helix" evidence="17">
    <location>
        <begin position="92"/>
        <end position="100"/>
    </location>
</feature>
<feature type="strand" evidence="17">
    <location>
        <begin position="104"/>
        <end position="110"/>
    </location>
</feature>
<feature type="helix" evidence="17">
    <location>
        <begin position="113"/>
        <end position="127"/>
    </location>
</feature>
<dbReference type="EMBL" id="K02175">
    <property type="protein sequence ID" value="AAA23577.1"/>
    <property type="molecule type" value="Genomic_DNA"/>
</dbReference>
<dbReference type="EMBL" id="AH000879">
    <property type="protein sequence ID" value="AAA23570.1"/>
    <property type="molecule type" value="Genomic_DNA"/>
</dbReference>
<dbReference type="EMBL" id="U00096">
    <property type="protein sequence ID" value="AAC74952.1"/>
    <property type="molecule type" value="Genomic_DNA"/>
</dbReference>
<dbReference type="EMBL" id="AP009048">
    <property type="protein sequence ID" value="BAA15698.1"/>
    <property type="molecule type" value="Genomic_DNA"/>
</dbReference>
<dbReference type="PIR" id="E25195">
    <property type="entry name" value="QRECCY"/>
</dbReference>
<dbReference type="RefSeq" id="NP_416396.1">
    <property type="nucleotide sequence ID" value="NC_000913.3"/>
</dbReference>
<dbReference type="RefSeq" id="WP_000763867.1">
    <property type="nucleotide sequence ID" value="NZ_STEB01000026.1"/>
</dbReference>
<dbReference type="PDB" id="1A0O">
    <property type="method" value="X-ray"/>
    <property type="resolution" value="2.95 A"/>
    <property type="chains" value="A/C/E/G=2-129"/>
</dbReference>
<dbReference type="PDB" id="1AB5">
    <property type="method" value="X-ray"/>
    <property type="resolution" value="2.40 A"/>
    <property type="chains" value="A/B=5-129"/>
</dbReference>
<dbReference type="PDB" id="1AB6">
    <property type="method" value="X-ray"/>
    <property type="resolution" value="2.20 A"/>
    <property type="chains" value="A/B=5-129"/>
</dbReference>
<dbReference type="PDB" id="1BDJ">
    <property type="method" value="X-ray"/>
    <property type="resolution" value="2.68 A"/>
    <property type="chains" value="A=2-129"/>
</dbReference>
<dbReference type="PDB" id="1C4W">
    <property type="method" value="X-ray"/>
    <property type="resolution" value="1.84 A"/>
    <property type="chains" value="A=2-129"/>
</dbReference>
<dbReference type="PDB" id="1CEY">
    <property type="method" value="NMR"/>
    <property type="chains" value="A=2-129"/>
</dbReference>
<dbReference type="PDB" id="1CHN">
    <property type="method" value="X-ray"/>
    <property type="resolution" value="1.76 A"/>
    <property type="chains" value="A=2-129"/>
</dbReference>
<dbReference type="PDB" id="1CYE">
    <property type="method" value="NMR"/>
    <property type="chains" value="A=3-129"/>
</dbReference>
<dbReference type="PDB" id="1D4Z">
    <property type="method" value="X-ray"/>
    <property type="resolution" value="1.90 A"/>
    <property type="chains" value="A=2-129"/>
</dbReference>
<dbReference type="PDB" id="1DJM">
    <property type="method" value="NMR"/>
    <property type="chains" value="A=1-129"/>
</dbReference>
<dbReference type="PDB" id="1E6K">
    <property type="method" value="X-ray"/>
    <property type="resolution" value="2.00 A"/>
    <property type="chains" value="A=3-129"/>
</dbReference>
<dbReference type="PDB" id="1E6L">
    <property type="method" value="X-ray"/>
    <property type="resolution" value="1.90 A"/>
    <property type="chains" value="A=3-129"/>
</dbReference>
<dbReference type="PDB" id="1E6M">
    <property type="method" value="X-ray"/>
    <property type="resolution" value="1.70 A"/>
    <property type="chains" value="A=3-129"/>
</dbReference>
<dbReference type="PDB" id="1EAY">
    <property type="method" value="X-ray"/>
    <property type="resolution" value="2.00 A"/>
    <property type="chains" value="A/B=2-129"/>
</dbReference>
<dbReference type="PDB" id="1EHC">
    <property type="method" value="X-ray"/>
    <property type="resolution" value="2.26 A"/>
    <property type="chains" value="A=2-129"/>
</dbReference>
<dbReference type="PDB" id="1F4V">
    <property type="method" value="X-ray"/>
    <property type="resolution" value="2.22 A"/>
    <property type="chains" value="A/B/C=2-129"/>
</dbReference>
<dbReference type="PDB" id="1FFG">
    <property type="method" value="X-ray"/>
    <property type="resolution" value="2.10 A"/>
    <property type="chains" value="A/C=2-129"/>
</dbReference>
<dbReference type="PDB" id="1FFS">
    <property type="method" value="X-ray"/>
    <property type="resolution" value="2.40 A"/>
    <property type="chains" value="A/C=2-129"/>
</dbReference>
<dbReference type="PDB" id="1FFW">
    <property type="method" value="X-ray"/>
    <property type="resolution" value="2.70 A"/>
    <property type="chains" value="A/C=2-129"/>
</dbReference>
<dbReference type="PDB" id="1FQW">
    <property type="method" value="X-ray"/>
    <property type="resolution" value="2.37 A"/>
    <property type="chains" value="A/B=2-129"/>
</dbReference>
<dbReference type="PDB" id="1HEY">
    <property type="method" value="X-ray"/>
    <property type="resolution" value="2.24 A"/>
    <property type="chains" value="A=2-129"/>
</dbReference>
<dbReference type="PDB" id="1JBE">
    <property type="method" value="X-ray"/>
    <property type="resolution" value="1.08 A"/>
    <property type="chains" value="A=2-129"/>
</dbReference>
<dbReference type="PDB" id="1KMI">
    <property type="method" value="X-ray"/>
    <property type="resolution" value="2.90 A"/>
    <property type="chains" value="Y=1-129"/>
</dbReference>
<dbReference type="PDB" id="1MIH">
    <property type="method" value="X-ray"/>
    <property type="resolution" value="2.70 A"/>
    <property type="chains" value="A/B=1-129"/>
</dbReference>
<dbReference type="PDB" id="1U8T">
    <property type="method" value="X-ray"/>
    <property type="resolution" value="1.50 A"/>
    <property type="chains" value="A/B/C/D=2-129"/>
</dbReference>
<dbReference type="PDB" id="1UDR">
    <property type="method" value="X-ray"/>
    <property type="resolution" value="1.90 A"/>
    <property type="chains" value="A/B/C/D=1-129"/>
</dbReference>
<dbReference type="PDB" id="1VLZ">
    <property type="method" value="X-ray"/>
    <property type="resolution" value="2.05 A"/>
    <property type="chains" value="A/B=2-129"/>
</dbReference>
<dbReference type="PDB" id="1YMU">
    <property type="method" value="X-ray"/>
    <property type="resolution" value="2.30 A"/>
    <property type="chains" value="A/B=3-129"/>
</dbReference>
<dbReference type="PDB" id="1YMV">
    <property type="method" value="X-ray"/>
    <property type="resolution" value="1.90 A"/>
    <property type="chains" value="A=3-129"/>
</dbReference>
<dbReference type="PDB" id="1ZDM">
    <property type="method" value="X-ray"/>
    <property type="resolution" value="2.40 A"/>
    <property type="chains" value="A/B=1-129"/>
</dbReference>
<dbReference type="PDB" id="2B1J">
    <property type="method" value="X-ray"/>
    <property type="resolution" value="2.40 A"/>
    <property type="chains" value="A/B=2-129"/>
</dbReference>
<dbReference type="PDB" id="2ID7">
    <property type="method" value="X-ray"/>
    <property type="resolution" value="1.75 A"/>
    <property type="chains" value="A=2-129"/>
</dbReference>
<dbReference type="PDB" id="2ID9">
    <property type="method" value="X-ray"/>
    <property type="resolution" value="1.75 A"/>
    <property type="chains" value="A=2-129"/>
</dbReference>
<dbReference type="PDB" id="2IDM">
    <property type="method" value="X-ray"/>
    <property type="resolution" value="2.00 A"/>
    <property type="chains" value="A=2-129"/>
</dbReference>
<dbReference type="PDB" id="2LP4">
    <property type="method" value="NMR"/>
    <property type="chains" value="Y=2-129"/>
</dbReference>
<dbReference type="PDB" id="3CHY">
    <property type="method" value="X-ray"/>
    <property type="resolution" value="1.66 A"/>
    <property type="chains" value="A=2-129"/>
</dbReference>
<dbReference type="PDB" id="3F7N">
    <property type="method" value="X-ray"/>
    <property type="resolution" value="2.00 A"/>
    <property type="chains" value="A/B=2-129"/>
</dbReference>
<dbReference type="PDB" id="3FFT">
    <property type="method" value="X-ray"/>
    <property type="resolution" value="2.21 A"/>
    <property type="chains" value="A/B=2-129"/>
</dbReference>
<dbReference type="PDB" id="3FFW">
    <property type="method" value="X-ray"/>
    <property type="resolution" value="2.00 A"/>
    <property type="chains" value="A/B=2-129"/>
</dbReference>
<dbReference type="PDB" id="3FFX">
    <property type="method" value="X-ray"/>
    <property type="resolution" value="2.01 A"/>
    <property type="chains" value="A/B=2-129"/>
</dbReference>
<dbReference type="PDB" id="3FGZ">
    <property type="method" value="X-ray"/>
    <property type="resolution" value="2.00 A"/>
    <property type="chains" value="A/B=2-129"/>
</dbReference>
<dbReference type="PDB" id="3MYY">
    <property type="method" value="X-ray"/>
    <property type="resolution" value="2.10 A"/>
    <property type="chains" value="A/B=2-129"/>
</dbReference>
<dbReference type="PDB" id="3OLV">
    <property type="method" value="X-ray"/>
    <property type="resolution" value="1.70 A"/>
    <property type="chains" value="A/B=1-129"/>
</dbReference>
<dbReference type="PDB" id="3OLW">
    <property type="method" value="X-ray"/>
    <property type="resolution" value="2.30 A"/>
    <property type="chains" value="A/B=1-129"/>
</dbReference>
<dbReference type="PDB" id="3OLX">
    <property type="method" value="X-ray"/>
    <property type="resolution" value="2.10 A"/>
    <property type="chains" value="A/B=1-129"/>
</dbReference>
<dbReference type="PDB" id="3OLY">
    <property type="method" value="X-ray"/>
    <property type="resolution" value="2.05 A"/>
    <property type="chains" value="A/B=1-129"/>
</dbReference>
<dbReference type="PDB" id="3OO0">
    <property type="method" value="X-ray"/>
    <property type="resolution" value="1.55 A"/>
    <property type="chains" value="A/B=1-129"/>
</dbReference>
<dbReference type="PDB" id="3OO1">
    <property type="method" value="X-ray"/>
    <property type="resolution" value="1.70 A"/>
    <property type="chains" value="A/B=1-129"/>
</dbReference>
<dbReference type="PDB" id="3RVJ">
    <property type="method" value="X-ray"/>
    <property type="resolution" value="2.10 A"/>
    <property type="chains" value="A/B=1-129"/>
</dbReference>
<dbReference type="PDB" id="3RVK">
    <property type="method" value="X-ray"/>
    <property type="resolution" value="1.16 A"/>
    <property type="chains" value="A=1-129"/>
</dbReference>
<dbReference type="PDB" id="3RVL">
    <property type="method" value="X-ray"/>
    <property type="resolution" value="1.55 A"/>
    <property type="chains" value="A/B=1-129"/>
</dbReference>
<dbReference type="PDB" id="3RVM">
    <property type="method" value="X-ray"/>
    <property type="resolution" value="1.45 A"/>
    <property type="chains" value="A=1-129"/>
</dbReference>
<dbReference type="PDB" id="3RVN">
    <property type="method" value="X-ray"/>
    <property type="resolution" value="2.25 A"/>
    <property type="chains" value="A/B=1-129"/>
</dbReference>
<dbReference type="PDB" id="3RVO">
    <property type="method" value="X-ray"/>
    <property type="resolution" value="1.55 A"/>
    <property type="chains" value="A=1-129"/>
</dbReference>
<dbReference type="PDB" id="3RVP">
    <property type="method" value="X-ray"/>
    <property type="resolution" value="2.40 A"/>
    <property type="chains" value="A/B=1-129"/>
</dbReference>
<dbReference type="PDB" id="3RVQ">
    <property type="method" value="X-ray"/>
    <property type="resolution" value="1.15 A"/>
    <property type="chains" value="A=1-129"/>
</dbReference>
<dbReference type="PDB" id="3RVR">
    <property type="method" value="X-ray"/>
    <property type="resolution" value="2.10 A"/>
    <property type="chains" value="A/B=1-129"/>
</dbReference>
<dbReference type="PDB" id="3RVS">
    <property type="method" value="X-ray"/>
    <property type="resolution" value="2.10 A"/>
    <property type="chains" value="A/B=1-129"/>
</dbReference>
<dbReference type="PDB" id="5CHY">
    <property type="method" value="X-ray"/>
    <property type="resolution" value="2.00 A"/>
    <property type="chains" value="A=2-129"/>
</dbReference>
<dbReference type="PDB" id="5D2C">
    <property type="method" value="X-ray"/>
    <property type="resolution" value="2.06 A"/>
    <property type="chains" value="A/B=2-129"/>
</dbReference>
<dbReference type="PDB" id="5DGC">
    <property type="method" value="X-ray"/>
    <property type="resolution" value="1.94 A"/>
    <property type="chains" value="A/B=2-129"/>
</dbReference>
<dbReference type="PDB" id="5DKF">
    <property type="method" value="X-ray"/>
    <property type="resolution" value="1.94 A"/>
    <property type="chains" value="A/B=2-129"/>
</dbReference>
<dbReference type="PDB" id="6CHY">
    <property type="method" value="X-ray"/>
    <property type="resolution" value="2.33 A"/>
    <property type="chains" value="A/B=2-129"/>
</dbReference>
<dbReference type="PDB" id="6TG7">
    <property type="method" value="X-ray"/>
    <property type="resolution" value="1.65 A"/>
    <property type="chains" value="A=1-129"/>
</dbReference>
<dbReference type="PDBsum" id="1A0O"/>
<dbReference type="PDBsum" id="1AB5"/>
<dbReference type="PDBsum" id="1AB6"/>
<dbReference type="PDBsum" id="1BDJ"/>
<dbReference type="PDBsum" id="1C4W"/>
<dbReference type="PDBsum" id="1CEY"/>
<dbReference type="PDBsum" id="1CHN"/>
<dbReference type="PDBsum" id="1CYE"/>
<dbReference type="PDBsum" id="1D4Z"/>
<dbReference type="PDBsum" id="1DJM"/>
<dbReference type="PDBsum" id="1E6K"/>
<dbReference type="PDBsum" id="1E6L"/>
<dbReference type="PDBsum" id="1E6M"/>
<dbReference type="PDBsum" id="1EAY"/>
<dbReference type="PDBsum" id="1EHC"/>
<dbReference type="PDBsum" id="1F4V"/>
<dbReference type="PDBsum" id="1FFG"/>
<dbReference type="PDBsum" id="1FFS"/>
<dbReference type="PDBsum" id="1FFW"/>
<dbReference type="PDBsum" id="1FQW"/>
<dbReference type="PDBsum" id="1HEY"/>
<dbReference type="PDBsum" id="1JBE"/>
<dbReference type="PDBsum" id="1KMI"/>
<dbReference type="PDBsum" id="1MIH"/>
<dbReference type="PDBsum" id="1U8T"/>
<dbReference type="PDBsum" id="1UDR"/>
<dbReference type="PDBsum" id="1VLZ"/>
<dbReference type="PDBsum" id="1YMU"/>
<dbReference type="PDBsum" id="1YMV"/>
<dbReference type="PDBsum" id="1ZDM"/>
<dbReference type="PDBsum" id="2B1J"/>
<dbReference type="PDBsum" id="2ID7"/>
<dbReference type="PDBsum" id="2ID9"/>
<dbReference type="PDBsum" id="2IDM"/>
<dbReference type="PDBsum" id="2LP4"/>
<dbReference type="PDBsum" id="3CHY"/>
<dbReference type="PDBsum" id="3F7N"/>
<dbReference type="PDBsum" id="3FFT"/>
<dbReference type="PDBsum" id="3FFW"/>
<dbReference type="PDBsum" id="3FFX"/>
<dbReference type="PDBsum" id="3FGZ"/>
<dbReference type="PDBsum" id="3MYY"/>
<dbReference type="PDBsum" id="3OLV"/>
<dbReference type="PDBsum" id="3OLW"/>
<dbReference type="PDBsum" id="3OLX"/>
<dbReference type="PDBsum" id="3OLY"/>
<dbReference type="PDBsum" id="3OO0"/>
<dbReference type="PDBsum" id="3OO1"/>
<dbReference type="PDBsum" id="3RVJ"/>
<dbReference type="PDBsum" id="3RVK"/>
<dbReference type="PDBsum" id="3RVL"/>
<dbReference type="PDBsum" id="3RVM"/>
<dbReference type="PDBsum" id="3RVN"/>
<dbReference type="PDBsum" id="3RVO"/>
<dbReference type="PDBsum" id="3RVP"/>
<dbReference type="PDBsum" id="3RVQ"/>
<dbReference type="PDBsum" id="3RVR"/>
<dbReference type="PDBsum" id="3RVS"/>
<dbReference type="PDBsum" id="5CHY"/>
<dbReference type="PDBsum" id="5D2C"/>
<dbReference type="PDBsum" id="5DGC"/>
<dbReference type="PDBsum" id="5DKF"/>
<dbReference type="PDBsum" id="6CHY"/>
<dbReference type="PDBsum" id="6TG7"/>
<dbReference type="BMRB" id="P0AE67"/>
<dbReference type="SMR" id="P0AE67"/>
<dbReference type="BioGRID" id="4259553">
    <property type="interactions" value="319"/>
</dbReference>
<dbReference type="ComplexPortal" id="CPX-1077">
    <property type="entry name" value="Chemotaxis phosphorelay complex CheA-CheY"/>
</dbReference>
<dbReference type="ComplexPortal" id="CPX-1082">
    <property type="entry name" value="Flagellar Motor Switch Complex, CW variant"/>
</dbReference>
<dbReference type="ComplexPortal" id="CPX-1088">
    <property type="entry name" value="Chemotaxis phosphorelay complex CheY-CheZ"/>
</dbReference>
<dbReference type="DIP" id="DIP-6052N"/>
<dbReference type="FunCoup" id="P0AE67">
    <property type="interactions" value="246"/>
</dbReference>
<dbReference type="IntAct" id="P0AE67">
    <property type="interactions" value="13"/>
</dbReference>
<dbReference type="STRING" id="511145.b1882"/>
<dbReference type="DrugBank" id="DB03487">
    <property type="generic name" value="(S)-Aspartimide"/>
</dbReference>
<dbReference type="DrugBank" id="DB04156">
    <property type="generic name" value="Aspartate beryllium trifluoride"/>
</dbReference>
<dbReference type="DrugBank" id="DB02461">
    <property type="generic name" value="S-Methyl Phosphocysteine"/>
</dbReference>
<dbReference type="iPTMnet" id="P0AE67"/>
<dbReference type="jPOST" id="P0AE67"/>
<dbReference type="PaxDb" id="511145-b1882"/>
<dbReference type="EnsemblBacteria" id="AAC74952">
    <property type="protein sequence ID" value="AAC74952"/>
    <property type="gene ID" value="b1882"/>
</dbReference>
<dbReference type="GeneID" id="93776187"/>
<dbReference type="GeneID" id="946393"/>
<dbReference type="KEGG" id="ecj:JW1871"/>
<dbReference type="KEGG" id="eco:b1882"/>
<dbReference type="KEGG" id="ecoc:C3026_10705"/>
<dbReference type="PATRIC" id="fig|1411691.4.peg.365"/>
<dbReference type="EchoBASE" id="EB0148"/>
<dbReference type="eggNOG" id="COG0745">
    <property type="taxonomic scope" value="Bacteria"/>
</dbReference>
<dbReference type="HOGENOM" id="CLU_000445_69_12_6"/>
<dbReference type="InParanoid" id="P0AE67"/>
<dbReference type="OMA" id="AAGAHEY"/>
<dbReference type="OrthoDB" id="9800897at2"/>
<dbReference type="PhylomeDB" id="P0AE67"/>
<dbReference type="BioCyc" id="EcoCyc:CHEY-MONOMER"/>
<dbReference type="EvolutionaryTrace" id="P0AE67"/>
<dbReference type="PRO" id="PR:P0AE67"/>
<dbReference type="Proteomes" id="UP000000625">
    <property type="component" value="Chromosome"/>
</dbReference>
<dbReference type="GO" id="GO:0009288">
    <property type="term" value="C:bacterial-type flagellum"/>
    <property type="evidence" value="ECO:0000303"/>
    <property type="project" value="ComplexPortal"/>
</dbReference>
<dbReference type="GO" id="GO:0009433">
    <property type="term" value="C:bacterial-type flagellum basal body, C ring"/>
    <property type="evidence" value="ECO:0000303"/>
    <property type="project" value="ComplexPortal"/>
</dbReference>
<dbReference type="GO" id="GO:0120107">
    <property type="term" value="C:bacterial-type flagellum rotor complex"/>
    <property type="evidence" value="ECO:0000303"/>
    <property type="project" value="ComplexPortal"/>
</dbReference>
<dbReference type="GO" id="GO:0005737">
    <property type="term" value="C:cytoplasm"/>
    <property type="evidence" value="ECO:0000314"/>
    <property type="project" value="ComplexPortal"/>
</dbReference>
<dbReference type="GO" id="GO:0005829">
    <property type="term" value="C:cytosol"/>
    <property type="evidence" value="ECO:0000314"/>
    <property type="project" value="EcoCyc"/>
</dbReference>
<dbReference type="GO" id="GO:0016407">
    <property type="term" value="F:acetyltransferase activity"/>
    <property type="evidence" value="ECO:0000314"/>
    <property type="project" value="CACAO"/>
</dbReference>
<dbReference type="GO" id="GO:0000287">
    <property type="term" value="F:magnesium ion binding"/>
    <property type="evidence" value="ECO:0000314"/>
    <property type="project" value="EcoCyc"/>
</dbReference>
<dbReference type="GO" id="GO:0000156">
    <property type="term" value="F:phosphorelay response regulator activity"/>
    <property type="evidence" value="ECO:0000314"/>
    <property type="project" value="CACAO"/>
</dbReference>
<dbReference type="GO" id="GO:0009454">
    <property type="term" value="P:aerotaxis"/>
    <property type="evidence" value="ECO:0000314"/>
    <property type="project" value="EcoCyc"/>
</dbReference>
<dbReference type="GO" id="GO:0071977">
    <property type="term" value="P:bacterial-type flagellum-dependent swimming motility"/>
    <property type="evidence" value="ECO:0000314"/>
    <property type="project" value="ComplexPortal"/>
</dbReference>
<dbReference type="GO" id="GO:0006935">
    <property type="term" value="P:chemotaxis"/>
    <property type="evidence" value="ECO:0000315"/>
    <property type="project" value="EcoCyc"/>
</dbReference>
<dbReference type="GO" id="GO:0018393">
    <property type="term" value="P:internal peptidyl-lysine acetylation"/>
    <property type="evidence" value="ECO:0000315"/>
    <property type="project" value="CACAO"/>
</dbReference>
<dbReference type="GO" id="GO:0000160">
    <property type="term" value="P:phosphorelay signal transduction system"/>
    <property type="evidence" value="ECO:0000314"/>
    <property type="project" value="ComplexPortal"/>
</dbReference>
<dbReference type="GO" id="GO:1902021">
    <property type="term" value="P:regulation of bacterial-type flagellum-dependent cell motility"/>
    <property type="evidence" value="ECO:0000314"/>
    <property type="project" value="EcoCyc"/>
</dbReference>
<dbReference type="GO" id="GO:0050920">
    <property type="term" value="P:regulation of chemotaxis"/>
    <property type="evidence" value="ECO:0000314"/>
    <property type="project" value="ComplexPortal"/>
</dbReference>
<dbReference type="GO" id="GO:0007165">
    <property type="term" value="P:signal transduction"/>
    <property type="evidence" value="ECO:0000314"/>
    <property type="project" value="EcoCyc"/>
</dbReference>
<dbReference type="GO" id="GO:0043052">
    <property type="term" value="P:thermotaxis"/>
    <property type="evidence" value="ECO:0000314"/>
    <property type="project" value="EcoCyc"/>
</dbReference>
<dbReference type="CDD" id="cd19923">
    <property type="entry name" value="REC_CheY_CheY3"/>
    <property type="match status" value="1"/>
</dbReference>
<dbReference type="FunFam" id="3.40.50.2300:FF:000019">
    <property type="entry name" value="Chemotaxis response regulator CheY"/>
    <property type="match status" value="1"/>
</dbReference>
<dbReference type="Gene3D" id="3.40.50.2300">
    <property type="match status" value="1"/>
</dbReference>
<dbReference type="InterPro" id="IPR011006">
    <property type="entry name" value="CheY-like_superfamily"/>
</dbReference>
<dbReference type="InterPro" id="IPR001789">
    <property type="entry name" value="Sig_transdc_resp-reg_receiver"/>
</dbReference>
<dbReference type="InterPro" id="IPR052048">
    <property type="entry name" value="ST_Response_Regulator"/>
</dbReference>
<dbReference type="NCBIfam" id="NF007901">
    <property type="entry name" value="PRK10610.1"/>
    <property type="match status" value="1"/>
</dbReference>
<dbReference type="PANTHER" id="PTHR43228">
    <property type="entry name" value="TWO-COMPONENT RESPONSE REGULATOR"/>
    <property type="match status" value="1"/>
</dbReference>
<dbReference type="PANTHER" id="PTHR43228:SF1">
    <property type="entry name" value="TWO-COMPONENT RESPONSE REGULATOR ARR22"/>
    <property type="match status" value="1"/>
</dbReference>
<dbReference type="Pfam" id="PF00072">
    <property type="entry name" value="Response_reg"/>
    <property type="match status" value="1"/>
</dbReference>
<dbReference type="SMART" id="SM00448">
    <property type="entry name" value="REC"/>
    <property type="match status" value="1"/>
</dbReference>
<dbReference type="SUPFAM" id="SSF52172">
    <property type="entry name" value="CheY-like"/>
    <property type="match status" value="1"/>
</dbReference>
<dbReference type="PROSITE" id="PS50110">
    <property type="entry name" value="RESPONSE_REGULATORY"/>
    <property type="match status" value="1"/>
</dbReference>
<proteinExistence type="evidence at protein level"/>
<gene>
    <name type="primary">cheY</name>
    <name type="ordered locus">b1882</name>
    <name type="ordered locus">JW1871</name>
</gene>
<keyword id="KW-0002">3D-structure</keyword>
<keyword id="KW-0007">Acetylation</keyword>
<keyword id="KW-0145">Chemotaxis</keyword>
<keyword id="KW-0963">Cytoplasm</keyword>
<keyword id="KW-0903">Direct protein sequencing</keyword>
<keyword id="KW-0283">Flagellar rotation</keyword>
<keyword id="KW-0460">Magnesium</keyword>
<keyword id="KW-0479">Metal-binding</keyword>
<keyword id="KW-0597">Phosphoprotein</keyword>
<keyword id="KW-1185">Reference proteome</keyword>
<keyword id="KW-0902">Two-component regulatory system</keyword>
<sequence length="129" mass="14097">MADKELKFLVVDDFSTMRRIVRNLLKELGFNNVEEAEDGVDALNKLQAGGYGFVISDWNMPNMDGLELLKTIRADGAMSALPVLMVTAEAKKENIIAAAQAGASGYVVKPFTAATLEEKLNKIFEKLGM</sequence>
<evidence type="ECO:0000250" key="1">
    <source>
        <dbReference type="UniProtKB" id="A0A0H3AMJ9"/>
    </source>
</evidence>
<evidence type="ECO:0000255" key="2">
    <source>
        <dbReference type="PROSITE-ProRule" id="PRU00169"/>
    </source>
</evidence>
<evidence type="ECO:0000269" key="3">
    <source>
    </source>
</evidence>
<evidence type="ECO:0000269" key="4">
    <source>
    </source>
</evidence>
<evidence type="ECO:0000269" key="5">
    <source>
    </source>
</evidence>
<evidence type="ECO:0000269" key="6">
    <source>
    </source>
</evidence>
<evidence type="ECO:0000269" key="7">
    <source>
    </source>
</evidence>
<evidence type="ECO:0000269" key="8">
    <source>
    </source>
</evidence>
<evidence type="ECO:0000269" key="9">
    <source>
    </source>
</evidence>
<evidence type="ECO:0000269" key="10">
    <source>
    </source>
</evidence>
<evidence type="ECO:0000269" key="11">
    <source>
    </source>
</evidence>
<evidence type="ECO:0000269" key="12">
    <source>
    </source>
</evidence>
<evidence type="ECO:0000269" key="13">
    <source>
    </source>
</evidence>
<evidence type="ECO:0000305" key="14"/>
<evidence type="ECO:0007744" key="15">
    <source>
        <dbReference type="PDB" id="1CHN"/>
    </source>
</evidence>
<evidence type="ECO:0007829" key="16">
    <source>
        <dbReference type="PDB" id="1CEY"/>
    </source>
</evidence>
<evidence type="ECO:0007829" key="17">
    <source>
        <dbReference type="PDB" id="1JBE"/>
    </source>
</evidence>
<evidence type="ECO:0007829" key="18">
    <source>
        <dbReference type="PDB" id="3RVL"/>
    </source>
</evidence>
<evidence type="ECO:0007829" key="19">
    <source>
        <dbReference type="PDB" id="3RVQ"/>
    </source>
</evidence>
<organism>
    <name type="scientific">Escherichia coli (strain K12)</name>
    <dbReference type="NCBI Taxonomy" id="83333"/>
    <lineage>
        <taxon>Bacteria</taxon>
        <taxon>Pseudomonadati</taxon>
        <taxon>Pseudomonadota</taxon>
        <taxon>Gammaproteobacteria</taxon>
        <taxon>Enterobacterales</taxon>
        <taxon>Enterobacteriaceae</taxon>
        <taxon>Escherichia</taxon>
    </lineage>
</organism>
<comment type="function">
    <text evidence="8">Involved in the transmission of sensory signals from the chemoreceptors to the flagellar motors. In its active (phosphorylated or acetylated) form, CheY exhibits enhanced binding to a switch component, FliM, at the flagellar motor which induces a change from counterclockwise to clockwise flagellar rotation. Overexpression of CheY in association with MotA and MotB improves motility of a ycgR disruption, suggesting there is an interaction (direct or indirect) between the c-di-GMP-binding flagellar brake protein and the flagellar stator.</text>
</comment>
<comment type="cofactor">
    <cofactor evidence="11">
        <name>Mg(2+)</name>
        <dbReference type="ChEBI" id="CHEBI:18420"/>
    </cofactor>
    <text evidence="11">Binds 1 Mg(2+) ion per subunit.</text>
</comment>
<comment type="subunit">
    <text evidence="5 12">Interacts (phosphorylated CheY) with CheZ (via C-terminus).</text>
</comment>
<comment type="interaction">
    <interactant intactId="EBI-546693">
        <id>P0AE67</id>
    </interactant>
    <interactant intactId="EBI-1026773">
        <id>P07363</id>
        <label>cheA</label>
    </interactant>
    <organismsDiffer>false</organismsDiffer>
    <experiments>7</experiments>
</comment>
<comment type="interaction">
    <interactant intactId="EBI-546693">
        <id>P0AE67</id>
    </interactant>
    <interactant intactId="EBI-546726">
        <id>P0A9H9</id>
        <label>cheZ</label>
    </interactant>
    <organismsDiffer>false</organismsDiffer>
    <experiments>6</experiments>
</comment>
<comment type="interaction">
    <interactant intactId="EBI-546693">
        <id>P0AE67</id>
    </interactant>
    <interactant intactId="EBI-15742036">
        <id>Q8KLS0</id>
        <label>cheA3</label>
    </interactant>
    <organismsDiffer>true</organismsDiffer>
    <experiments>2</experiments>
</comment>
<comment type="subcellular location">
    <subcellularLocation>
        <location evidence="14">Cytoplasm</location>
    </subcellularLocation>
</comment>
<comment type="PTM">
    <text evidence="4 6 9 10 13">Phosphorylated by CheA or acetylated by acetyl-CoA synthetase, depending on which acetate metabolism pathway is available. The major acetylation site seems to be Lys-92. Dephosphorylated (inactivated) by CheZ.</text>
</comment>
<comment type="mass spectrometry" mass="13966.0" method="Electrospray" evidence="13"/>
<comment type="mass spectrometry" mass="14008.0" method="Electrospray" evidence="13">
    <text>With N6-acetyl-Lys-92.</text>
</comment>
<name>CHEY_ECOLI</name>
<reference key="1">
    <citation type="journal article" date="1984" name="J. Bacteriol.">
        <title>Overexpression and sequence of the Escherichia coli cheY gene and biochemical activities of the CheY protein.</title>
        <authorList>
            <person name="Matsumura P."/>
            <person name="Rydel J.J."/>
            <person name="Linzmeier R."/>
            <person name="Vacante D."/>
        </authorList>
    </citation>
    <scope>NUCLEOTIDE SEQUENCE [GENOMIC DNA]</scope>
</reference>
<reference key="2">
    <citation type="journal article" date="1986" name="J. Bacteriol.">
        <title>Nucleotide sequence corresponding to five chemotaxis genes in Escherichia coli.</title>
        <authorList>
            <person name="Mutoh N."/>
            <person name="Simon M.I."/>
        </authorList>
    </citation>
    <scope>NUCLEOTIDE SEQUENCE [GENOMIC DNA]</scope>
</reference>
<reference key="3">
    <citation type="journal article" date="1996" name="DNA Res.">
        <title>A 460-kb DNA sequence of the Escherichia coli K-12 genome corresponding to the 40.1-50.0 min region on the linkage map.</title>
        <authorList>
            <person name="Itoh T."/>
            <person name="Aiba H."/>
            <person name="Baba T."/>
            <person name="Fujita K."/>
            <person name="Hayashi K."/>
            <person name="Inada T."/>
            <person name="Isono K."/>
            <person name="Kasai H."/>
            <person name="Kimura S."/>
            <person name="Kitakawa M."/>
            <person name="Kitagawa M."/>
            <person name="Makino K."/>
            <person name="Miki T."/>
            <person name="Mizobuchi K."/>
            <person name="Mori H."/>
            <person name="Mori T."/>
            <person name="Motomura K."/>
            <person name="Nakade S."/>
            <person name="Nakamura Y."/>
            <person name="Nashimoto H."/>
            <person name="Nishio Y."/>
            <person name="Oshima T."/>
            <person name="Saito N."/>
            <person name="Sampei G."/>
            <person name="Seki Y."/>
            <person name="Sivasundaram S."/>
            <person name="Tagami H."/>
            <person name="Takeda J."/>
            <person name="Takemoto K."/>
            <person name="Wada C."/>
            <person name="Yamamoto Y."/>
            <person name="Horiuchi T."/>
        </authorList>
    </citation>
    <scope>NUCLEOTIDE SEQUENCE [LARGE SCALE GENOMIC DNA]</scope>
    <source>
        <strain>K12 / W3110 / ATCC 27325 / DSM 5911</strain>
    </source>
</reference>
<reference key="4">
    <citation type="journal article" date="1997" name="Science">
        <title>The complete genome sequence of Escherichia coli K-12.</title>
        <authorList>
            <person name="Blattner F.R."/>
            <person name="Plunkett G. III"/>
            <person name="Bloch C.A."/>
            <person name="Perna N.T."/>
            <person name="Burland V."/>
            <person name="Riley M."/>
            <person name="Collado-Vides J."/>
            <person name="Glasner J.D."/>
            <person name="Rode C.K."/>
            <person name="Mayhew G.F."/>
            <person name="Gregor J."/>
            <person name="Davis N.W."/>
            <person name="Kirkpatrick H.A."/>
            <person name="Goeden M.A."/>
            <person name="Rose D.J."/>
            <person name="Mau B."/>
            <person name="Shao Y."/>
        </authorList>
    </citation>
    <scope>NUCLEOTIDE SEQUENCE [LARGE SCALE GENOMIC DNA]</scope>
    <source>
        <strain>K12 / MG1655 / ATCC 47076</strain>
    </source>
</reference>
<reference key="5">
    <citation type="journal article" date="2006" name="Mol. Syst. Biol.">
        <title>Highly accurate genome sequences of Escherichia coli K-12 strains MG1655 and W3110.</title>
        <authorList>
            <person name="Hayashi K."/>
            <person name="Morooka N."/>
            <person name="Yamamoto Y."/>
            <person name="Fujita K."/>
            <person name="Isono K."/>
            <person name="Choi S."/>
            <person name="Ohtsubo E."/>
            <person name="Baba T."/>
            <person name="Wanner B.L."/>
            <person name="Mori H."/>
            <person name="Horiuchi T."/>
        </authorList>
    </citation>
    <scope>NUCLEOTIDE SEQUENCE [LARGE SCALE GENOMIC DNA]</scope>
    <source>
        <strain>K12 / W3110 / ATCC 27325 / DSM 5911</strain>
    </source>
</reference>
<reference key="6">
    <citation type="journal article" date="1988" name="Cell">
        <title>Phosphorylation of three proteins in the signaling pathway of bacterial chemotaxis.</title>
        <authorList>
            <person name="Hess J.F."/>
            <person name="Oosawa K."/>
            <person name="Kaplan N."/>
            <person name="Simon M.I."/>
        </authorList>
    </citation>
    <scope>PHOSPHORYLATION</scope>
</reference>
<reference key="7">
    <citation type="journal article" date="1989" name="J. Biol. Chem.">
        <title>Identification of the site of phosphorylation of the chemotaxis response regulator protein, CheY.</title>
        <authorList>
            <person name="Sanders D.A."/>
            <person name="Gillece-Castro B.L."/>
            <person name="Stock A.M."/>
            <person name="Burlingame A.L."/>
            <person name="Koshland D.E. Jr."/>
        </authorList>
    </citation>
    <scope>PHOSPHORYLATION AT ASP-57</scope>
    <scope>PARTIAL PROTEIN SEQUENCE</scope>
</reference>
<reference key="8">
    <citation type="journal article" date="1992" name="Biochemistry">
        <title>Acetyladenylate or its derivative acetylates the chemotaxis protein CheY in vitro and increases its activity at the flagellar switch.</title>
        <authorList>
            <person name="Barak R."/>
            <person name="Welch M."/>
            <person name="Yanovsky A."/>
            <person name="Oosawa K."/>
            <person name="Eisenbach M."/>
        </authorList>
    </citation>
    <scope>ACETYLATION AT LYS-109</scope>
</reference>
<reference key="9">
    <citation type="journal article" date="1996" name="Mol. Microbiol.">
        <title>Characterization of the CheAS/CheZ complex: a specific interaction resulting in enhanced dephosphorylating activity on CheY-phosphate.</title>
        <authorList>
            <person name="Wang H."/>
            <person name="Matsumura P."/>
        </authorList>
    </citation>
    <scope>DEPHOSPHORYLATION BY CHEAS/CHEZ COMPLEX</scope>
</reference>
<reference key="10">
    <citation type="journal article" date="1997" name="Electrophoresis">
        <title>Escherichia coli proteome analysis using the gene-protein database.</title>
        <authorList>
            <person name="VanBogelen R.A."/>
            <person name="Abshire K.Z."/>
            <person name="Moldover B."/>
            <person name="Olson E.R."/>
            <person name="Neidhardt F.C."/>
        </authorList>
    </citation>
    <scope>IDENTIFICATION BY 2D-GEL</scope>
</reference>
<reference key="11">
    <citation type="journal article" date="1998" name="Proc. Natl. Acad. Sci. U.S.A.">
        <title>Acetylation at Lys-92 enhances signaling by the chemotaxis response regulator protein CheY.</title>
        <authorList>
            <person name="Ramakrishnan R."/>
            <person name="Schuster M."/>
            <person name="Bourret R.B."/>
        </authorList>
    </citation>
    <scope>ACETYLATION AT LYS-92 AND LYS-109 BY ACETYL-COA SYNTHETASE</scope>
    <scope>MASS SPECTROMETRY</scope>
    <scope>MUTAGENESIS OF LYS-92</scope>
</reference>
<reference key="12">
    <citation type="journal article" date="2001" name="Mol. Microbiol.">
        <title>Acetylation of the response regulator, CheY, is involved in bacterial chemotaxis.</title>
        <authorList>
            <person name="Barak R."/>
            <person name="Eisenbach M."/>
        </authorList>
    </citation>
    <scope>ACETYLATION AT LYS-92</scope>
</reference>
<reference key="13">
    <citation type="journal article" date="2008" name="J. Biol. Chem.">
        <title>Kinetic characterization of catalysis by the chemotaxis phosphatase CheZ. Modulation of activity by the phosphorylated CheY substrate.</title>
        <authorList>
            <person name="Silversmith R.E."/>
            <person name="Levin M.D."/>
            <person name="Schilling E."/>
            <person name="Bourret R.B."/>
        </authorList>
    </citation>
    <scope>DEPHOSPHORYLATION BY CHEZ</scope>
</reference>
<reference key="14">
    <citation type="journal article" date="2010" name="Mol. Cell">
        <title>The c-di-GMP binding protein YcgR controls flagellar motor direction and speed to affect chemotaxis by a 'backstop brake' mechanism.</title>
        <authorList>
            <person name="Paul K."/>
            <person name="Nieto V."/>
            <person name="Carlquist W.C."/>
            <person name="Blair D.F."/>
            <person name="Harshey R.M."/>
        </authorList>
    </citation>
    <scope>FUNCTION</scope>
    <source>
        <strain>K12 / RP3098</strain>
    </source>
</reference>
<reference key="15">
    <citation type="journal article" date="1991" name="J. Biol. Chem.">
        <title>Crystal structure of Escherichia coli CheY refined at 1.7-A resolution.</title>
        <authorList>
            <person name="Volz K."/>
            <person name="Matsumura P."/>
        </authorList>
    </citation>
    <scope>X-RAY CRYSTALLOGRAPHY (1.7 ANGSTROMS)</scope>
</reference>
<reference key="16">
    <citation type="journal article" date="1994" name="J. Mol. Biol.">
        <title>Magnesium binding to the bacterial chemotaxis protein CheY results in large conformational changes involving its functional surface.</title>
        <authorList>
            <person name="Bellsolell L."/>
            <person name="Prieto J."/>
            <person name="Serrano L."/>
            <person name="Coll M."/>
        </authorList>
    </citation>
    <scope>X-RAY CRYSTALLOGRAPHY (1.76 ANGSTROMS) OF 2-129 IN COMPLEX WITH MG(2+)</scope>
</reference>
<reference key="17">
    <citation type="journal article" date="1994" name="J. Mol. Biol.">
        <authorList>
            <person name="Bellsolell L."/>
            <person name="Prieto J."/>
            <person name="Serrano L."/>
            <person name="Coll M."/>
        </authorList>
    </citation>
    <scope>ERRATUM OF PUBMED:8176739</scope>
</reference>
<reference key="18">
    <citation type="journal article" date="1996" name="J. Mol. Biol.">
        <title>The three-dimensional structure of two mutants of the signal transduction protein CheY suggest its molecular activation mechanism.</title>
        <authorList>
            <person name="Bellsolell L."/>
            <person name="Cronet P."/>
            <person name="Majolero M."/>
            <person name="Serrano L."/>
            <person name="Coll M."/>
        </authorList>
    </citation>
    <scope>X-RAY CRYSTALLOGRAPHY (1.9 ANGSTROMS) OF MUTANTS GLY-17 AND GLY-14/GLY-15/GLY-17</scope>
</reference>
<reference key="19">
    <citation type="journal article" date="1997" name="J. Biol. Chem.">
        <title>Crystal structures of CheY mutants Y106W and T87I/Y106W. CheY activation correlates with movement of residue 106.</title>
        <authorList>
            <person name="Zhu X."/>
            <person name="Rebello J."/>
            <person name="Matsumura P."/>
            <person name="Volz K."/>
        </authorList>
    </citation>
    <scope>X-RAY CRYSTALLOGRAPHY (2.0 ANGSTROMS) OF MUTANTS TRP-106 AND ILE-87/TRP-106</scope>
</reference>
<reference key="20">
    <citation type="journal article" date="1998" name="Acta Crystallogr. D">
        <title>Structure analysis of two CheY mutants: importance of the hydrogen-bond contribution to protein stability.</title>
        <authorList>
            <person name="Wilcock D."/>
            <person name="Pisabarro M.T."/>
            <person name="Lopez-Hernandez E."/>
            <person name="Serrano L."/>
            <person name="Coll M."/>
        </authorList>
    </citation>
    <scope>X-RAY CRYSTALLOGRAPHY (2.4 ANGSTROMS)</scope>
</reference>
<reference key="21">
    <citation type="journal article" date="1998" name="Nat. Struct. Biol.">
        <title>Structure of the CheY-binding domain of histidine kinase CheA in complex with CheY.</title>
        <authorList>
            <person name="Welch M."/>
            <person name="Chinardet N."/>
            <person name="Mourey L."/>
            <person name="Birck C."/>
            <person name="Samama J.-P."/>
        </authorList>
    </citation>
    <scope>X-RAY CRYSTALLOGRAPHY (2.95 ANGSTROMS) IN COMPLEX WITH CHEA</scope>
</reference>
<reference key="22">
    <citation type="journal article" date="1998" name="Proc. Natl. Acad. Sci. U.S.A.">
        <title>Two binding modes reveal flexibility in kinase/response regulator interactions in the bacterial chemotaxis pathway.</title>
        <authorList>
            <person name="McEvoy M.M."/>
            <person name="Hausrath A.C."/>
            <person name="Randolph G.B."/>
            <person name="Remington S.J."/>
            <person name="Dahlquist F.W."/>
        </authorList>
    </citation>
    <scope>X-RAY CRYSTALLOGRAPHY (2.0 ANGSTROMS)</scope>
</reference>
<reference key="23">
    <citation type="journal article" date="2000" name="J. Biol. Chem.">
        <title>Correlated switch binding and signaling in bacterial chemotaxis.</title>
        <authorList>
            <person name="Schuster M."/>
            <person name="Zhao R."/>
            <person name="Bourret R.B."/>
            <person name="Collins E.J."/>
        </authorList>
    </citation>
    <scope>X-RAY CRYSTALLOGRAPHY (1.9 ANGSTROMS) OF MUTANT VAL-95</scope>
</reference>
<reference key="24">
    <citation type="journal article" date="1998" name="Acta Crystallogr. D">
        <title>Crystallization of a complex between a novel C-terminal transmitter, HPt domain, of the anaerobic sensor kinase ArcB and the chemotaxis response regulator CheY.</title>
        <authorList>
            <person name="Kato M."/>
            <person name="Mizuno T."/>
            <person name="Hakoshima T."/>
        </authorList>
    </citation>
    <scope>X-RAY CRYSTALLOGRAPHY (2.7 ANGSTROMS) OF COMPLEX WITH ARCB</scope>
</reference>
<reference key="25">
    <citation type="journal article" date="2000" name="J. Mol. Biol.">
        <title>Towards understanding a molecular switch mechanism: thermodynamic and crystallographic studies of the signal transduction protein CheY.</title>
        <authorList>
            <person name="Sola M."/>
            <person name="Lopez-Hernandez E."/>
            <person name="Cronet P."/>
            <person name="Lacroix E."/>
            <person name="Serrano L."/>
            <person name="Coll M."/>
            <person name="Parraga A."/>
        </authorList>
    </citation>
    <scope>X-RAY CRYSTALLOGRAPHY (1.7 ANGSTROMS)</scope>
    <scope>MUTAGENESIS OF ASP-12; ASP-13 AND ASP-57</scope>
</reference>
<reference key="26">
    <citation type="journal article" date="2002" name="Nat. Struct. Biol.">
        <title>Structure and catalytic mechanism of the E. coli chemotaxis phosphatase CheZ.</title>
        <authorList>
            <person name="Zhao R."/>
            <person name="Collins E.J."/>
            <person name="Bourret R.B."/>
            <person name="Silversmith R.E."/>
        </authorList>
    </citation>
    <scope>X-RAY CRYSTALLOGRAPHY (2.9 ANGSTROMS) IN COMPLEX WITH CHEZ</scope>
</reference>
<reference key="27">
    <citation type="journal article" date="1993" name="Eur. J. Biochem.">
        <title>1H- and 15N-NMR assignment and solution structure of the chemotactic Escherichia coli Che Y protein.</title>
        <authorList>
            <person name="Bruix M."/>
            <person name="Pascual J."/>
            <person name="Santoro J."/>
            <person name="Prieto J."/>
            <person name="Serrano L."/>
            <person name="Rico M."/>
        </authorList>
    </citation>
    <scope>STRUCTURE BY NMR</scope>
</reference>
<reference key="28">
    <citation type="journal article" date="2000" name="J. Mol. Biol.">
        <title>NMR structure of activated CheY.</title>
        <authorList>
            <person name="Cho H.S."/>
            <person name="Lee S.-Y."/>
            <person name="Yan D."/>
            <person name="Pan X."/>
            <person name="Parkinson J.S."/>
            <person name="Kustu S."/>
            <person name="Wemmer D.E."/>
            <person name="Pelton J.G."/>
        </authorList>
    </citation>
    <scope>STRUCTURE BY NMR</scope>
</reference>